<reference key="1">
    <citation type="submission" date="2006-12" db="EMBL/GenBank/DDBJ databases">
        <title>Complete sequence of Chlorobium phaeobacteroides DSM 266.</title>
        <authorList>
            <consortium name="US DOE Joint Genome Institute"/>
            <person name="Copeland A."/>
            <person name="Lucas S."/>
            <person name="Lapidus A."/>
            <person name="Barry K."/>
            <person name="Detter J.C."/>
            <person name="Glavina del Rio T."/>
            <person name="Hammon N."/>
            <person name="Israni S."/>
            <person name="Pitluck S."/>
            <person name="Goltsman E."/>
            <person name="Schmutz J."/>
            <person name="Larimer F."/>
            <person name="Land M."/>
            <person name="Hauser L."/>
            <person name="Mikhailova N."/>
            <person name="Li T."/>
            <person name="Overmann J."/>
            <person name="Bryant D.A."/>
            <person name="Richardson P."/>
        </authorList>
    </citation>
    <scope>NUCLEOTIDE SEQUENCE [LARGE SCALE GENOMIC DNA]</scope>
    <source>
        <strain>DSM 266 / SMG 266 / 2430</strain>
    </source>
</reference>
<comment type="function">
    <text evidence="1">This protein binds to the 23S rRNA, and is important in its secondary structure. It is located near the subunit interface in the base of the L7/L12 stalk, and near the tRNA binding site of the peptidyltransferase center.</text>
</comment>
<comment type="subunit">
    <text evidence="1">Part of the 50S ribosomal subunit.</text>
</comment>
<comment type="similarity">
    <text evidence="1">Belongs to the universal ribosomal protein uL6 family.</text>
</comment>
<evidence type="ECO:0000255" key="1">
    <source>
        <dbReference type="HAMAP-Rule" id="MF_01365"/>
    </source>
</evidence>
<evidence type="ECO:0000305" key="2"/>
<gene>
    <name evidence="1" type="primary">rplF</name>
    <name type="ordered locus">Cpha266_2408</name>
</gene>
<name>RL6_CHLPD</name>
<keyword id="KW-1185">Reference proteome</keyword>
<keyword id="KW-0687">Ribonucleoprotein</keyword>
<keyword id="KW-0689">Ribosomal protein</keyword>
<keyword id="KW-0694">RNA-binding</keyword>
<keyword id="KW-0699">rRNA-binding</keyword>
<protein>
    <recommendedName>
        <fullName evidence="1">Large ribosomal subunit protein uL6</fullName>
    </recommendedName>
    <alternativeName>
        <fullName evidence="2">50S ribosomal protein L6</fullName>
    </alternativeName>
</protein>
<feature type="chain" id="PRO_1000055217" description="Large ribosomal subunit protein uL6">
    <location>
        <begin position="1"/>
        <end position="179"/>
    </location>
</feature>
<accession>A1BJ19</accession>
<organism>
    <name type="scientific">Chlorobium phaeobacteroides (strain DSM 266 / SMG 266 / 2430)</name>
    <dbReference type="NCBI Taxonomy" id="290317"/>
    <lineage>
        <taxon>Bacteria</taxon>
        <taxon>Pseudomonadati</taxon>
        <taxon>Chlorobiota</taxon>
        <taxon>Chlorobiia</taxon>
        <taxon>Chlorobiales</taxon>
        <taxon>Chlorobiaceae</taxon>
        <taxon>Chlorobium/Pelodictyon group</taxon>
        <taxon>Chlorobium</taxon>
    </lineage>
</organism>
<proteinExistence type="inferred from homology"/>
<sequence length="179" mass="19722">MSRIGKMPIPLSNQAKIEITDTDLTVTGPKGKLHQALTPQVIITQEDGVVTVQRIDDSKKAKAMHGLYRVLISNMVEGVTNGFTRKLEIAGVGYRAELKNDFLALTLGYSHMIYFKAPDEITIQVPDQTTILVTGIDKALVGQVAAKIRSFRKPEPYRGKGIKYEGEVIRRKEGKAAGK</sequence>
<dbReference type="EMBL" id="CP000492">
    <property type="protein sequence ID" value="ABL66396.1"/>
    <property type="molecule type" value="Genomic_DNA"/>
</dbReference>
<dbReference type="RefSeq" id="WP_011746178.1">
    <property type="nucleotide sequence ID" value="NC_008639.1"/>
</dbReference>
<dbReference type="SMR" id="A1BJ19"/>
<dbReference type="STRING" id="290317.Cpha266_2408"/>
<dbReference type="KEGG" id="cph:Cpha266_2408"/>
<dbReference type="eggNOG" id="COG0097">
    <property type="taxonomic scope" value="Bacteria"/>
</dbReference>
<dbReference type="HOGENOM" id="CLU_065464_1_2_10"/>
<dbReference type="OrthoDB" id="9805007at2"/>
<dbReference type="Proteomes" id="UP000008701">
    <property type="component" value="Chromosome"/>
</dbReference>
<dbReference type="GO" id="GO:0022625">
    <property type="term" value="C:cytosolic large ribosomal subunit"/>
    <property type="evidence" value="ECO:0007669"/>
    <property type="project" value="TreeGrafter"/>
</dbReference>
<dbReference type="GO" id="GO:0019843">
    <property type="term" value="F:rRNA binding"/>
    <property type="evidence" value="ECO:0007669"/>
    <property type="project" value="UniProtKB-UniRule"/>
</dbReference>
<dbReference type="GO" id="GO:0003735">
    <property type="term" value="F:structural constituent of ribosome"/>
    <property type="evidence" value="ECO:0007669"/>
    <property type="project" value="InterPro"/>
</dbReference>
<dbReference type="GO" id="GO:0002181">
    <property type="term" value="P:cytoplasmic translation"/>
    <property type="evidence" value="ECO:0007669"/>
    <property type="project" value="TreeGrafter"/>
</dbReference>
<dbReference type="FunFam" id="3.90.930.12:FF:000001">
    <property type="entry name" value="50S ribosomal protein L6"/>
    <property type="match status" value="1"/>
</dbReference>
<dbReference type="FunFam" id="3.90.930.12:FF:000002">
    <property type="entry name" value="50S ribosomal protein L6"/>
    <property type="match status" value="1"/>
</dbReference>
<dbReference type="Gene3D" id="3.90.930.12">
    <property type="entry name" value="Ribosomal protein L6, alpha-beta domain"/>
    <property type="match status" value="2"/>
</dbReference>
<dbReference type="HAMAP" id="MF_01365_B">
    <property type="entry name" value="Ribosomal_uL6_B"/>
    <property type="match status" value="1"/>
</dbReference>
<dbReference type="InterPro" id="IPR000702">
    <property type="entry name" value="Ribosomal_uL6-like"/>
</dbReference>
<dbReference type="InterPro" id="IPR036789">
    <property type="entry name" value="Ribosomal_uL6-like_a/b-dom_sf"/>
</dbReference>
<dbReference type="InterPro" id="IPR020040">
    <property type="entry name" value="Ribosomal_uL6_a/b-dom"/>
</dbReference>
<dbReference type="InterPro" id="IPR019906">
    <property type="entry name" value="Ribosomal_uL6_bac-type"/>
</dbReference>
<dbReference type="NCBIfam" id="TIGR03654">
    <property type="entry name" value="L6_bact"/>
    <property type="match status" value="1"/>
</dbReference>
<dbReference type="PANTHER" id="PTHR11655">
    <property type="entry name" value="60S/50S RIBOSOMAL PROTEIN L6/L9"/>
    <property type="match status" value="1"/>
</dbReference>
<dbReference type="PANTHER" id="PTHR11655:SF14">
    <property type="entry name" value="LARGE RIBOSOMAL SUBUNIT PROTEIN UL6M"/>
    <property type="match status" value="1"/>
</dbReference>
<dbReference type="Pfam" id="PF00347">
    <property type="entry name" value="Ribosomal_L6"/>
    <property type="match status" value="2"/>
</dbReference>
<dbReference type="PIRSF" id="PIRSF002162">
    <property type="entry name" value="Ribosomal_L6"/>
    <property type="match status" value="1"/>
</dbReference>
<dbReference type="PRINTS" id="PR00059">
    <property type="entry name" value="RIBOSOMALL6"/>
</dbReference>
<dbReference type="SUPFAM" id="SSF56053">
    <property type="entry name" value="Ribosomal protein L6"/>
    <property type="match status" value="2"/>
</dbReference>